<name>ASSY_THEPX</name>
<dbReference type="EC" id="6.3.4.5" evidence="1"/>
<dbReference type="EMBL" id="CP000923">
    <property type="protein sequence ID" value="ABY91971.1"/>
    <property type="molecule type" value="Genomic_DNA"/>
</dbReference>
<dbReference type="RefSeq" id="WP_003868142.1">
    <property type="nucleotide sequence ID" value="NC_010320.1"/>
</dbReference>
<dbReference type="SMR" id="B0K4D8"/>
<dbReference type="KEGG" id="tex:Teth514_0663"/>
<dbReference type="HOGENOM" id="CLU_032784_4_2_9"/>
<dbReference type="UniPathway" id="UPA00068">
    <property type="reaction ID" value="UER00113"/>
</dbReference>
<dbReference type="Proteomes" id="UP000002155">
    <property type="component" value="Chromosome"/>
</dbReference>
<dbReference type="GO" id="GO:0005737">
    <property type="term" value="C:cytoplasm"/>
    <property type="evidence" value="ECO:0007669"/>
    <property type="project" value="UniProtKB-SubCell"/>
</dbReference>
<dbReference type="GO" id="GO:0004055">
    <property type="term" value="F:argininosuccinate synthase activity"/>
    <property type="evidence" value="ECO:0007669"/>
    <property type="project" value="UniProtKB-UniRule"/>
</dbReference>
<dbReference type="GO" id="GO:0005524">
    <property type="term" value="F:ATP binding"/>
    <property type="evidence" value="ECO:0007669"/>
    <property type="project" value="UniProtKB-UniRule"/>
</dbReference>
<dbReference type="GO" id="GO:0000053">
    <property type="term" value="P:argininosuccinate metabolic process"/>
    <property type="evidence" value="ECO:0007669"/>
    <property type="project" value="TreeGrafter"/>
</dbReference>
<dbReference type="GO" id="GO:0006526">
    <property type="term" value="P:L-arginine biosynthetic process"/>
    <property type="evidence" value="ECO:0007669"/>
    <property type="project" value="UniProtKB-UniRule"/>
</dbReference>
<dbReference type="GO" id="GO:0000050">
    <property type="term" value="P:urea cycle"/>
    <property type="evidence" value="ECO:0007669"/>
    <property type="project" value="TreeGrafter"/>
</dbReference>
<dbReference type="CDD" id="cd01999">
    <property type="entry name" value="ASS"/>
    <property type="match status" value="1"/>
</dbReference>
<dbReference type="FunFam" id="3.40.50.620:FF:000019">
    <property type="entry name" value="Argininosuccinate synthase"/>
    <property type="match status" value="1"/>
</dbReference>
<dbReference type="FunFam" id="3.90.1260.10:FF:000007">
    <property type="entry name" value="Argininosuccinate synthase"/>
    <property type="match status" value="1"/>
</dbReference>
<dbReference type="Gene3D" id="3.90.1260.10">
    <property type="entry name" value="Argininosuccinate synthetase, chain A, domain 2"/>
    <property type="match status" value="1"/>
</dbReference>
<dbReference type="Gene3D" id="3.40.50.620">
    <property type="entry name" value="HUPs"/>
    <property type="match status" value="1"/>
</dbReference>
<dbReference type="Gene3D" id="1.20.5.470">
    <property type="entry name" value="Single helix bin"/>
    <property type="match status" value="1"/>
</dbReference>
<dbReference type="HAMAP" id="MF_00005">
    <property type="entry name" value="Arg_succ_synth_type1"/>
    <property type="match status" value="1"/>
</dbReference>
<dbReference type="InterPro" id="IPR048268">
    <property type="entry name" value="Arginosuc_syn_C"/>
</dbReference>
<dbReference type="InterPro" id="IPR048267">
    <property type="entry name" value="Arginosuc_syn_N"/>
</dbReference>
<dbReference type="InterPro" id="IPR001518">
    <property type="entry name" value="Arginosuc_synth"/>
</dbReference>
<dbReference type="InterPro" id="IPR018223">
    <property type="entry name" value="Arginosuc_synth_CS"/>
</dbReference>
<dbReference type="InterPro" id="IPR023434">
    <property type="entry name" value="Arginosuc_synth_type_1_subfam"/>
</dbReference>
<dbReference type="InterPro" id="IPR024074">
    <property type="entry name" value="AS_cat/multimer_dom_body"/>
</dbReference>
<dbReference type="InterPro" id="IPR014729">
    <property type="entry name" value="Rossmann-like_a/b/a_fold"/>
</dbReference>
<dbReference type="NCBIfam" id="TIGR00032">
    <property type="entry name" value="argG"/>
    <property type="match status" value="1"/>
</dbReference>
<dbReference type="NCBIfam" id="NF001770">
    <property type="entry name" value="PRK00509.1"/>
    <property type="match status" value="1"/>
</dbReference>
<dbReference type="PANTHER" id="PTHR11587">
    <property type="entry name" value="ARGININOSUCCINATE SYNTHASE"/>
    <property type="match status" value="1"/>
</dbReference>
<dbReference type="PANTHER" id="PTHR11587:SF2">
    <property type="entry name" value="ARGININOSUCCINATE SYNTHASE"/>
    <property type="match status" value="1"/>
</dbReference>
<dbReference type="Pfam" id="PF20979">
    <property type="entry name" value="Arginosuc_syn_C"/>
    <property type="match status" value="1"/>
</dbReference>
<dbReference type="Pfam" id="PF00764">
    <property type="entry name" value="Arginosuc_synth"/>
    <property type="match status" value="1"/>
</dbReference>
<dbReference type="SUPFAM" id="SSF52402">
    <property type="entry name" value="Adenine nucleotide alpha hydrolases-like"/>
    <property type="match status" value="1"/>
</dbReference>
<dbReference type="SUPFAM" id="SSF69864">
    <property type="entry name" value="Argininosuccinate synthetase, C-terminal domain"/>
    <property type="match status" value="1"/>
</dbReference>
<dbReference type="PROSITE" id="PS00564">
    <property type="entry name" value="ARGININOSUCCIN_SYN_1"/>
    <property type="match status" value="1"/>
</dbReference>
<dbReference type="PROSITE" id="PS00565">
    <property type="entry name" value="ARGININOSUCCIN_SYN_2"/>
    <property type="match status" value="1"/>
</dbReference>
<proteinExistence type="inferred from homology"/>
<keyword id="KW-0028">Amino-acid biosynthesis</keyword>
<keyword id="KW-0055">Arginine biosynthesis</keyword>
<keyword id="KW-0067">ATP-binding</keyword>
<keyword id="KW-0963">Cytoplasm</keyword>
<keyword id="KW-0436">Ligase</keyword>
<keyword id="KW-0547">Nucleotide-binding</keyword>
<organism>
    <name type="scientific">Thermoanaerobacter sp. (strain X514)</name>
    <dbReference type="NCBI Taxonomy" id="399726"/>
    <lineage>
        <taxon>Bacteria</taxon>
        <taxon>Bacillati</taxon>
        <taxon>Bacillota</taxon>
        <taxon>Clostridia</taxon>
        <taxon>Thermoanaerobacterales</taxon>
        <taxon>Thermoanaerobacteraceae</taxon>
        <taxon>Thermoanaerobacter</taxon>
    </lineage>
</organism>
<gene>
    <name evidence="1" type="primary">argG</name>
    <name type="ordered locus">Teth514_0663</name>
</gene>
<sequence length="410" mass="45806">MLKGEKVVLAYSGGLDTSVIIPWLKENYECEIIAACINVGQGEELKYIKDKALASGASKVYIEDVKEEFVKDYIFPTLKAGAVYEGKYLLGTSMARPLIAKKLVEIAHKEGAKAIAHGATGKGNDQVRFEVSIHALDPSIKIIAPWRIWDLKSREDEIDYAKKKGIPIPVTKEKIYSVDNNLWHVSHEGGDLEDPWNEPKSDLYDIITPPDKAPDKPEYVLIEFEKGIPVKVNGKALEPVKLIEELNAIAGRNGVGIADLVENRLVGMKSRGVYETPAGTLLYAAHKELEYLVLDKETMRFKDLVSQKYADLVYNGLWFSPLKAALDAFVEETQKNVTGVVRLKLYKGNVINAGVKSPYSLYNQEFVTFGKDEVYNQKDAEGFINLFGLSLKIKALMEMERKDMDEAVGR</sequence>
<comment type="catalytic activity">
    <reaction evidence="1">
        <text>L-citrulline + L-aspartate + ATP = 2-(N(omega)-L-arginino)succinate + AMP + diphosphate + H(+)</text>
        <dbReference type="Rhea" id="RHEA:10932"/>
        <dbReference type="ChEBI" id="CHEBI:15378"/>
        <dbReference type="ChEBI" id="CHEBI:29991"/>
        <dbReference type="ChEBI" id="CHEBI:30616"/>
        <dbReference type="ChEBI" id="CHEBI:33019"/>
        <dbReference type="ChEBI" id="CHEBI:57472"/>
        <dbReference type="ChEBI" id="CHEBI:57743"/>
        <dbReference type="ChEBI" id="CHEBI:456215"/>
        <dbReference type="EC" id="6.3.4.5"/>
    </reaction>
</comment>
<comment type="pathway">
    <text evidence="1">Amino-acid biosynthesis; L-arginine biosynthesis; L-arginine from L-ornithine and carbamoyl phosphate: step 2/3.</text>
</comment>
<comment type="subunit">
    <text evidence="1">Homotetramer.</text>
</comment>
<comment type="subcellular location">
    <subcellularLocation>
        <location evidence="1">Cytoplasm</location>
    </subcellularLocation>
</comment>
<comment type="similarity">
    <text evidence="1">Belongs to the argininosuccinate synthase family. Type 1 subfamily.</text>
</comment>
<reference key="1">
    <citation type="submission" date="2008-01" db="EMBL/GenBank/DDBJ databases">
        <title>Complete sequence of Thermoanaerobacter sp. X514.</title>
        <authorList>
            <consortium name="US DOE Joint Genome Institute"/>
            <person name="Copeland A."/>
            <person name="Lucas S."/>
            <person name="Lapidus A."/>
            <person name="Barry K."/>
            <person name="Glavina del Rio T."/>
            <person name="Dalin E."/>
            <person name="Tice H."/>
            <person name="Pitluck S."/>
            <person name="Bruce D."/>
            <person name="Goodwin L."/>
            <person name="Saunders E."/>
            <person name="Brettin T."/>
            <person name="Detter J.C."/>
            <person name="Han C."/>
            <person name="Schmutz J."/>
            <person name="Larimer F."/>
            <person name="Land M."/>
            <person name="Hauser L."/>
            <person name="Kyrpides N."/>
            <person name="Kim E."/>
            <person name="Hemme C."/>
            <person name="Fields M.W."/>
            <person name="He Z."/>
            <person name="Zhou J."/>
            <person name="Richardson P."/>
        </authorList>
    </citation>
    <scope>NUCLEOTIDE SEQUENCE [LARGE SCALE GENOMIC DNA]</scope>
    <source>
        <strain>X514</strain>
    </source>
</reference>
<protein>
    <recommendedName>
        <fullName evidence="1">Argininosuccinate synthase</fullName>
        <ecNumber evidence="1">6.3.4.5</ecNumber>
    </recommendedName>
    <alternativeName>
        <fullName evidence="1">Citrulline--aspartate ligase</fullName>
    </alternativeName>
</protein>
<feature type="chain" id="PRO_1000089058" description="Argininosuccinate synthase">
    <location>
        <begin position="1"/>
        <end position="410"/>
    </location>
</feature>
<feature type="binding site" evidence="1">
    <location>
        <begin position="10"/>
        <end position="18"/>
    </location>
    <ligand>
        <name>ATP</name>
        <dbReference type="ChEBI" id="CHEBI:30616"/>
    </ligand>
</feature>
<feature type="binding site" evidence="1">
    <location>
        <position position="88"/>
    </location>
    <ligand>
        <name>L-citrulline</name>
        <dbReference type="ChEBI" id="CHEBI:57743"/>
    </ligand>
</feature>
<feature type="binding site" evidence="1">
    <location>
        <position position="93"/>
    </location>
    <ligand>
        <name>L-citrulline</name>
        <dbReference type="ChEBI" id="CHEBI:57743"/>
    </ligand>
</feature>
<feature type="binding site" evidence="1">
    <location>
        <position position="118"/>
    </location>
    <ligand>
        <name>ATP</name>
        <dbReference type="ChEBI" id="CHEBI:30616"/>
    </ligand>
</feature>
<feature type="binding site" evidence="1">
    <location>
        <position position="120"/>
    </location>
    <ligand>
        <name>L-aspartate</name>
        <dbReference type="ChEBI" id="CHEBI:29991"/>
    </ligand>
</feature>
<feature type="binding site" evidence="1">
    <location>
        <position position="124"/>
    </location>
    <ligand>
        <name>L-aspartate</name>
        <dbReference type="ChEBI" id="CHEBI:29991"/>
    </ligand>
</feature>
<feature type="binding site" evidence="1">
    <location>
        <position position="124"/>
    </location>
    <ligand>
        <name>L-citrulline</name>
        <dbReference type="ChEBI" id="CHEBI:57743"/>
    </ligand>
</feature>
<feature type="binding site" evidence="1">
    <location>
        <position position="125"/>
    </location>
    <ligand>
        <name>L-aspartate</name>
        <dbReference type="ChEBI" id="CHEBI:29991"/>
    </ligand>
</feature>
<feature type="binding site" evidence="1">
    <location>
        <position position="128"/>
    </location>
    <ligand>
        <name>L-citrulline</name>
        <dbReference type="ChEBI" id="CHEBI:57743"/>
    </ligand>
</feature>
<feature type="binding site" evidence="1">
    <location>
        <position position="177"/>
    </location>
    <ligand>
        <name>L-citrulline</name>
        <dbReference type="ChEBI" id="CHEBI:57743"/>
    </ligand>
</feature>
<feature type="binding site" evidence="1">
    <location>
        <position position="186"/>
    </location>
    <ligand>
        <name>L-citrulline</name>
        <dbReference type="ChEBI" id="CHEBI:57743"/>
    </ligand>
</feature>
<feature type="binding site" evidence="1">
    <location>
        <position position="262"/>
    </location>
    <ligand>
        <name>L-citrulline</name>
        <dbReference type="ChEBI" id="CHEBI:57743"/>
    </ligand>
</feature>
<feature type="binding site" evidence="1">
    <location>
        <position position="274"/>
    </location>
    <ligand>
        <name>L-citrulline</name>
        <dbReference type="ChEBI" id="CHEBI:57743"/>
    </ligand>
</feature>
<evidence type="ECO:0000255" key="1">
    <source>
        <dbReference type="HAMAP-Rule" id="MF_00005"/>
    </source>
</evidence>
<accession>B0K4D8</accession>